<evidence type="ECO:0000255" key="1">
    <source>
        <dbReference type="PROSITE-ProRule" id="PRU00794"/>
    </source>
</evidence>
<evidence type="ECO:0000269" key="2">
    <source>
    </source>
</evidence>
<evidence type="ECO:0000305" key="3"/>
<feature type="chain" id="PRO_0000317227" description="Uncharacterized Nudix hydrolase P35G2.12">
    <location>
        <begin position="1"/>
        <end position="205"/>
    </location>
</feature>
<feature type="domain" description="Nudix hydrolase" evidence="1">
    <location>
        <begin position="51"/>
        <end position="189"/>
    </location>
</feature>
<feature type="short sequence motif" description="Nudix box">
    <location>
        <begin position="90"/>
        <end position="111"/>
    </location>
</feature>
<gene>
    <name type="ORF">SPBP35G2.12</name>
</gene>
<reference key="1">
    <citation type="journal article" date="2002" name="Nature">
        <title>The genome sequence of Schizosaccharomyces pombe.</title>
        <authorList>
            <person name="Wood V."/>
            <person name="Gwilliam R."/>
            <person name="Rajandream M.A."/>
            <person name="Lyne M.H."/>
            <person name="Lyne R."/>
            <person name="Stewart A."/>
            <person name="Sgouros J.G."/>
            <person name="Peat N."/>
            <person name="Hayles J."/>
            <person name="Baker S.G."/>
            <person name="Basham D."/>
            <person name="Bowman S."/>
            <person name="Brooks K."/>
            <person name="Brown D."/>
            <person name="Brown S."/>
            <person name="Chillingworth T."/>
            <person name="Churcher C.M."/>
            <person name="Collins M."/>
            <person name="Connor R."/>
            <person name="Cronin A."/>
            <person name="Davis P."/>
            <person name="Feltwell T."/>
            <person name="Fraser A."/>
            <person name="Gentles S."/>
            <person name="Goble A."/>
            <person name="Hamlin N."/>
            <person name="Harris D.E."/>
            <person name="Hidalgo J."/>
            <person name="Hodgson G."/>
            <person name="Holroyd S."/>
            <person name="Hornsby T."/>
            <person name="Howarth S."/>
            <person name="Huckle E.J."/>
            <person name="Hunt S."/>
            <person name="Jagels K."/>
            <person name="James K.D."/>
            <person name="Jones L."/>
            <person name="Jones M."/>
            <person name="Leather S."/>
            <person name="McDonald S."/>
            <person name="McLean J."/>
            <person name="Mooney P."/>
            <person name="Moule S."/>
            <person name="Mungall K.L."/>
            <person name="Murphy L.D."/>
            <person name="Niblett D."/>
            <person name="Odell C."/>
            <person name="Oliver K."/>
            <person name="O'Neil S."/>
            <person name="Pearson D."/>
            <person name="Quail M.A."/>
            <person name="Rabbinowitsch E."/>
            <person name="Rutherford K.M."/>
            <person name="Rutter S."/>
            <person name="Saunders D."/>
            <person name="Seeger K."/>
            <person name="Sharp S."/>
            <person name="Skelton J."/>
            <person name="Simmonds M.N."/>
            <person name="Squares R."/>
            <person name="Squares S."/>
            <person name="Stevens K."/>
            <person name="Taylor K."/>
            <person name="Taylor R.G."/>
            <person name="Tivey A."/>
            <person name="Walsh S.V."/>
            <person name="Warren T."/>
            <person name="Whitehead S."/>
            <person name="Woodward J.R."/>
            <person name="Volckaert G."/>
            <person name="Aert R."/>
            <person name="Robben J."/>
            <person name="Grymonprez B."/>
            <person name="Weltjens I."/>
            <person name="Vanstreels E."/>
            <person name="Rieger M."/>
            <person name="Schaefer M."/>
            <person name="Mueller-Auer S."/>
            <person name="Gabel C."/>
            <person name="Fuchs M."/>
            <person name="Duesterhoeft A."/>
            <person name="Fritzc C."/>
            <person name="Holzer E."/>
            <person name="Moestl D."/>
            <person name="Hilbert H."/>
            <person name="Borzym K."/>
            <person name="Langer I."/>
            <person name="Beck A."/>
            <person name="Lehrach H."/>
            <person name="Reinhardt R."/>
            <person name="Pohl T.M."/>
            <person name="Eger P."/>
            <person name="Zimmermann W."/>
            <person name="Wedler H."/>
            <person name="Wambutt R."/>
            <person name="Purnelle B."/>
            <person name="Goffeau A."/>
            <person name="Cadieu E."/>
            <person name="Dreano S."/>
            <person name="Gloux S."/>
            <person name="Lelaure V."/>
            <person name="Mottier S."/>
            <person name="Galibert F."/>
            <person name="Aves S.J."/>
            <person name="Xiang Z."/>
            <person name="Hunt C."/>
            <person name="Moore K."/>
            <person name="Hurst S.M."/>
            <person name="Lucas M."/>
            <person name="Rochet M."/>
            <person name="Gaillardin C."/>
            <person name="Tallada V.A."/>
            <person name="Garzon A."/>
            <person name="Thode G."/>
            <person name="Daga R.R."/>
            <person name="Cruzado L."/>
            <person name="Jimenez J."/>
            <person name="Sanchez M."/>
            <person name="del Rey F."/>
            <person name="Benito J."/>
            <person name="Dominguez A."/>
            <person name="Revuelta J.L."/>
            <person name="Moreno S."/>
            <person name="Armstrong J."/>
            <person name="Forsburg S.L."/>
            <person name="Cerutti L."/>
            <person name="Lowe T."/>
            <person name="McCombie W.R."/>
            <person name="Paulsen I."/>
            <person name="Potashkin J."/>
            <person name="Shpakovski G.V."/>
            <person name="Ussery D."/>
            <person name="Barrell B.G."/>
            <person name="Nurse P."/>
        </authorList>
    </citation>
    <scope>NUCLEOTIDE SEQUENCE [LARGE SCALE GENOMIC DNA]</scope>
    <source>
        <strain>972 / ATCC 24843</strain>
    </source>
</reference>
<reference key="2">
    <citation type="journal article" date="2006" name="Nat. Biotechnol.">
        <title>ORFeome cloning and global analysis of protein localization in the fission yeast Schizosaccharomyces pombe.</title>
        <authorList>
            <person name="Matsuyama A."/>
            <person name="Arai R."/>
            <person name="Yashiroda Y."/>
            <person name="Shirai A."/>
            <person name="Kamata A."/>
            <person name="Sekido S."/>
            <person name="Kobayashi Y."/>
            <person name="Hashimoto A."/>
            <person name="Hamamoto M."/>
            <person name="Hiraoka Y."/>
            <person name="Horinouchi S."/>
            <person name="Yoshida M."/>
        </authorList>
    </citation>
    <scope>SUBCELLULAR LOCATION [LARGE SCALE ANALYSIS]</scope>
</reference>
<sequence length="205" mass="23032">MSQDQKPKVLEVSNLENQDAKWTSLKKIRWQDEKGKIRFWEMAERTTRSEANVDAVAILAIVPIDGSPHVLCQKQFRPPIGKFCIEIPAGLVDSKESCEDAAIRELREETGYVGTVMDSTTVMYNDPGLTNANLKIILADIDMSKPENQNPQQQLDDGEYIENFPIKLSSLQEELFSLEKKGFAIDVRLSTFALGLHAGLKYLSS</sequence>
<proteinExistence type="inferred from homology"/>
<protein>
    <recommendedName>
        <fullName>Uncharacterized Nudix hydrolase P35G2.12</fullName>
        <ecNumber>3.6.-.-</ecNumber>
    </recommendedName>
</protein>
<keyword id="KW-0963">Cytoplasm</keyword>
<keyword id="KW-0378">Hydrolase</keyword>
<keyword id="KW-0539">Nucleus</keyword>
<keyword id="KW-1185">Reference proteome</keyword>
<comment type="subcellular location">
    <subcellularLocation>
        <location evidence="2">Cytoplasm</location>
    </subcellularLocation>
    <subcellularLocation>
        <location evidence="2">Nucleus</location>
    </subcellularLocation>
</comment>
<comment type="similarity">
    <text evidence="3">Belongs to the Nudix hydrolase family.</text>
</comment>
<accession>Q9P791</accession>
<name>YN8C_SCHPO</name>
<organism>
    <name type="scientific">Schizosaccharomyces pombe (strain 972 / ATCC 24843)</name>
    <name type="common">Fission yeast</name>
    <dbReference type="NCBI Taxonomy" id="284812"/>
    <lineage>
        <taxon>Eukaryota</taxon>
        <taxon>Fungi</taxon>
        <taxon>Dikarya</taxon>
        <taxon>Ascomycota</taxon>
        <taxon>Taphrinomycotina</taxon>
        <taxon>Schizosaccharomycetes</taxon>
        <taxon>Schizosaccharomycetales</taxon>
        <taxon>Schizosaccharomycetaceae</taxon>
        <taxon>Schizosaccharomyces</taxon>
    </lineage>
</organism>
<dbReference type="EC" id="3.6.-.-"/>
<dbReference type="EMBL" id="CU329671">
    <property type="protein sequence ID" value="CAB87374.1"/>
    <property type="molecule type" value="Genomic_DNA"/>
</dbReference>
<dbReference type="SMR" id="Q9P791"/>
<dbReference type="BioGRID" id="277867">
    <property type="interactions" value="8"/>
</dbReference>
<dbReference type="FunCoup" id="Q9P791">
    <property type="interactions" value="570"/>
</dbReference>
<dbReference type="STRING" id="284812.Q9P791"/>
<dbReference type="PaxDb" id="4896-SPBP35G2.12.1"/>
<dbReference type="EnsemblFungi" id="SPBP35G2.12.1">
    <property type="protein sequence ID" value="SPBP35G2.12.1:pep"/>
    <property type="gene ID" value="SPBP35G2.12"/>
</dbReference>
<dbReference type="KEGG" id="spo:2541356"/>
<dbReference type="PomBase" id="SPBP35G2.12"/>
<dbReference type="VEuPathDB" id="FungiDB:SPBP35G2.12"/>
<dbReference type="eggNOG" id="KOG3041">
    <property type="taxonomic scope" value="Eukaryota"/>
</dbReference>
<dbReference type="HOGENOM" id="CLU_062658_0_1_1"/>
<dbReference type="InParanoid" id="Q9P791"/>
<dbReference type="OMA" id="NDPGLCN"/>
<dbReference type="PhylomeDB" id="Q9P791"/>
<dbReference type="Reactome" id="R-SPO-2393930">
    <property type="pathway name" value="Phosphate bond hydrolysis by NUDT proteins"/>
</dbReference>
<dbReference type="PRO" id="PR:Q9P791"/>
<dbReference type="Proteomes" id="UP000002485">
    <property type="component" value="Chromosome II"/>
</dbReference>
<dbReference type="GO" id="GO:0005829">
    <property type="term" value="C:cytosol"/>
    <property type="evidence" value="ECO:0007005"/>
    <property type="project" value="PomBase"/>
</dbReference>
<dbReference type="GO" id="GO:0005634">
    <property type="term" value="C:nucleus"/>
    <property type="evidence" value="ECO:0007005"/>
    <property type="project" value="PomBase"/>
</dbReference>
<dbReference type="GO" id="GO:0047631">
    <property type="term" value="F:ADP-ribose diphosphatase activity"/>
    <property type="evidence" value="ECO:0000318"/>
    <property type="project" value="GO_Central"/>
</dbReference>
<dbReference type="GO" id="GO:0006753">
    <property type="term" value="P:nucleoside phosphate metabolic process"/>
    <property type="evidence" value="ECO:0000318"/>
    <property type="project" value="GO_Central"/>
</dbReference>
<dbReference type="GO" id="GO:0009191">
    <property type="term" value="P:ribonucleoside diphosphate catabolic process"/>
    <property type="evidence" value="ECO:0000305"/>
    <property type="project" value="PomBase"/>
</dbReference>
<dbReference type="GO" id="GO:0019693">
    <property type="term" value="P:ribose phosphate metabolic process"/>
    <property type="evidence" value="ECO:0000318"/>
    <property type="project" value="GO_Central"/>
</dbReference>
<dbReference type="CDD" id="cd18888">
    <property type="entry name" value="NUDIX_ADPRase_Nudt5"/>
    <property type="match status" value="1"/>
</dbReference>
<dbReference type="FunFam" id="3.90.79.10:FF:000016">
    <property type="entry name" value="ADP-sugar pyrophosphatase isoform X1"/>
    <property type="match status" value="1"/>
</dbReference>
<dbReference type="Gene3D" id="3.90.79.10">
    <property type="entry name" value="Nucleoside Triphosphate Pyrophosphohydrolase"/>
    <property type="match status" value="1"/>
</dbReference>
<dbReference type="InterPro" id="IPR015797">
    <property type="entry name" value="NUDIX_hydrolase-like_dom_sf"/>
</dbReference>
<dbReference type="InterPro" id="IPR020084">
    <property type="entry name" value="NUDIX_hydrolase_CS"/>
</dbReference>
<dbReference type="InterPro" id="IPR000086">
    <property type="entry name" value="NUDIX_hydrolase_dom"/>
</dbReference>
<dbReference type="PANTHER" id="PTHR11839:SF1">
    <property type="entry name" value="ADP-SUGAR PYROPHOSPHATASE"/>
    <property type="match status" value="1"/>
</dbReference>
<dbReference type="PANTHER" id="PTHR11839">
    <property type="entry name" value="UDP/ADP-SUGAR PYROPHOSPHATASE"/>
    <property type="match status" value="1"/>
</dbReference>
<dbReference type="Pfam" id="PF00293">
    <property type="entry name" value="NUDIX"/>
    <property type="match status" value="1"/>
</dbReference>
<dbReference type="SUPFAM" id="SSF55811">
    <property type="entry name" value="Nudix"/>
    <property type="match status" value="1"/>
</dbReference>
<dbReference type="PROSITE" id="PS51462">
    <property type="entry name" value="NUDIX"/>
    <property type="match status" value="1"/>
</dbReference>
<dbReference type="PROSITE" id="PS00893">
    <property type="entry name" value="NUDIX_BOX"/>
    <property type="match status" value="1"/>
</dbReference>